<feature type="chain" id="PRO_0000225886" description="Small ribosomal subunit protein uS8">
    <location>
        <begin position="1"/>
        <end position="132"/>
    </location>
</feature>
<name>RS8_PSYA2</name>
<protein>
    <recommendedName>
        <fullName evidence="1">Small ribosomal subunit protein uS8</fullName>
    </recommendedName>
    <alternativeName>
        <fullName evidence="2">30S ribosomal protein S8</fullName>
    </alternativeName>
</protein>
<proteinExistence type="inferred from homology"/>
<comment type="function">
    <text evidence="1">One of the primary rRNA binding proteins, it binds directly to 16S rRNA central domain where it helps coordinate assembly of the platform of the 30S subunit.</text>
</comment>
<comment type="subunit">
    <text evidence="1">Part of the 30S ribosomal subunit. Contacts proteins S5 and S12.</text>
</comment>
<comment type="similarity">
    <text evidence="1">Belongs to the universal ribosomal protein uS8 family.</text>
</comment>
<dbReference type="EMBL" id="CP000082">
    <property type="protein sequence ID" value="AAZ18366.1"/>
    <property type="molecule type" value="Genomic_DNA"/>
</dbReference>
<dbReference type="RefSeq" id="WP_011279799.1">
    <property type="nucleotide sequence ID" value="NC_007204.1"/>
</dbReference>
<dbReference type="SMR" id="Q4FUE2"/>
<dbReference type="STRING" id="259536.Psyc_0503"/>
<dbReference type="KEGG" id="par:Psyc_0503"/>
<dbReference type="eggNOG" id="COG0096">
    <property type="taxonomic scope" value="Bacteria"/>
</dbReference>
<dbReference type="HOGENOM" id="CLU_098428_0_0_6"/>
<dbReference type="OrthoDB" id="9802617at2"/>
<dbReference type="Proteomes" id="UP000000546">
    <property type="component" value="Chromosome"/>
</dbReference>
<dbReference type="GO" id="GO:1990904">
    <property type="term" value="C:ribonucleoprotein complex"/>
    <property type="evidence" value="ECO:0007669"/>
    <property type="project" value="UniProtKB-KW"/>
</dbReference>
<dbReference type="GO" id="GO:0005840">
    <property type="term" value="C:ribosome"/>
    <property type="evidence" value="ECO:0007669"/>
    <property type="project" value="UniProtKB-KW"/>
</dbReference>
<dbReference type="GO" id="GO:0019843">
    <property type="term" value="F:rRNA binding"/>
    <property type="evidence" value="ECO:0007669"/>
    <property type="project" value="UniProtKB-UniRule"/>
</dbReference>
<dbReference type="GO" id="GO:0003735">
    <property type="term" value="F:structural constituent of ribosome"/>
    <property type="evidence" value="ECO:0007669"/>
    <property type="project" value="InterPro"/>
</dbReference>
<dbReference type="GO" id="GO:0006412">
    <property type="term" value="P:translation"/>
    <property type="evidence" value="ECO:0007669"/>
    <property type="project" value="UniProtKB-UniRule"/>
</dbReference>
<dbReference type="FunFam" id="3.30.1370.30:FF:000002">
    <property type="entry name" value="30S ribosomal protein S8"/>
    <property type="match status" value="1"/>
</dbReference>
<dbReference type="FunFam" id="3.30.1490.10:FF:000001">
    <property type="entry name" value="30S ribosomal protein S8"/>
    <property type="match status" value="1"/>
</dbReference>
<dbReference type="Gene3D" id="3.30.1370.30">
    <property type="match status" value="1"/>
</dbReference>
<dbReference type="Gene3D" id="3.30.1490.10">
    <property type="match status" value="1"/>
</dbReference>
<dbReference type="HAMAP" id="MF_01302_B">
    <property type="entry name" value="Ribosomal_uS8_B"/>
    <property type="match status" value="1"/>
</dbReference>
<dbReference type="InterPro" id="IPR000630">
    <property type="entry name" value="Ribosomal_uS8"/>
</dbReference>
<dbReference type="InterPro" id="IPR047863">
    <property type="entry name" value="Ribosomal_uS8_CS"/>
</dbReference>
<dbReference type="InterPro" id="IPR035987">
    <property type="entry name" value="Ribosomal_uS8_sf"/>
</dbReference>
<dbReference type="NCBIfam" id="NF001109">
    <property type="entry name" value="PRK00136.1"/>
    <property type="match status" value="1"/>
</dbReference>
<dbReference type="PANTHER" id="PTHR11758">
    <property type="entry name" value="40S RIBOSOMAL PROTEIN S15A"/>
    <property type="match status" value="1"/>
</dbReference>
<dbReference type="Pfam" id="PF00410">
    <property type="entry name" value="Ribosomal_S8"/>
    <property type="match status" value="1"/>
</dbReference>
<dbReference type="SUPFAM" id="SSF56047">
    <property type="entry name" value="Ribosomal protein S8"/>
    <property type="match status" value="1"/>
</dbReference>
<dbReference type="PROSITE" id="PS00053">
    <property type="entry name" value="RIBOSOMAL_S8"/>
    <property type="match status" value="1"/>
</dbReference>
<gene>
    <name evidence="1" type="primary">rpsH</name>
    <name type="ordered locus">Psyc_0503</name>
</gene>
<evidence type="ECO:0000255" key="1">
    <source>
        <dbReference type="HAMAP-Rule" id="MF_01302"/>
    </source>
</evidence>
<evidence type="ECO:0000305" key="2"/>
<accession>Q4FUE2</accession>
<sequence length="132" mass="14123">MSMQDTVGDMLTRIRNAQMANKVSVAMPSSKLRKSIADLLVNEGYVASAVVTEENNNKATLTIVLKYFEGKAVIETIQRFSRPGLRQHRGKDAIPTVKQGMGVAIVSTSQGIMSDRAARAAGIGGEIVAFVA</sequence>
<reference key="1">
    <citation type="journal article" date="2010" name="Appl. Environ. Microbiol.">
        <title>The genome sequence of Psychrobacter arcticus 273-4, a psychroactive Siberian permafrost bacterium, reveals mechanisms for adaptation to low-temperature growth.</title>
        <authorList>
            <person name="Ayala-del-Rio H.L."/>
            <person name="Chain P.S."/>
            <person name="Grzymski J.J."/>
            <person name="Ponder M.A."/>
            <person name="Ivanova N."/>
            <person name="Bergholz P.W."/>
            <person name="Di Bartolo G."/>
            <person name="Hauser L."/>
            <person name="Land M."/>
            <person name="Bakermans C."/>
            <person name="Rodrigues D."/>
            <person name="Klappenbach J."/>
            <person name="Zarka D."/>
            <person name="Larimer F."/>
            <person name="Richardson P."/>
            <person name="Murray A."/>
            <person name="Thomashow M."/>
            <person name="Tiedje J.M."/>
        </authorList>
    </citation>
    <scope>NUCLEOTIDE SEQUENCE [LARGE SCALE GENOMIC DNA]</scope>
    <source>
        <strain>DSM 17307 / VKM B-2377 / 273-4</strain>
    </source>
</reference>
<keyword id="KW-1185">Reference proteome</keyword>
<keyword id="KW-0687">Ribonucleoprotein</keyword>
<keyword id="KW-0689">Ribosomal protein</keyword>
<keyword id="KW-0694">RNA-binding</keyword>
<keyword id="KW-0699">rRNA-binding</keyword>
<organism>
    <name type="scientific">Psychrobacter arcticus (strain DSM 17307 / VKM B-2377 / 273-4)</name>
    <dbReference type="NCBI Taxonomy" id="259536"/>
    <lineage>
        <taxon>Bacteria</taxon>
        <taxon>Pseudomonadati</taxon>
        <taxon>Pseudomonadota</taxon>
        <taxon>Gammaproteobacteria</taxon>
        <taxon>Moraxellales</taxon>
        <taxon>Moraxellaceae</taxon>
        <taxon>Psychrobacter</taxon>
    </lineage>
</organism>